<comment type="function">
    <text evidence="1">With S4 and S5 plays an important role in translational accuracy.</text>
</comment>
<comment type="function">
    <text evidence="1">Interacts with and stabilizes bases of the 16S rRNA that are involved in tRNA selection in the A site and with the mRNA backbone. Located at the interface of the 30S and 50S subunits, it traverses the body of the 30S subunit contacting proteins on the other side and probably holding the rRNA structure together. The combined cluster of proteins S8, S12 and S17 appears to hold together the shoulder and platform of the 30S subunit.</text>
</comment>
<comment type="subunit">
    <text evidence="1">Part of the 30S ribosomal subunit. Contacts proteins S8 and S17. May interact with IF1 in the 30S initiation complex.</text>
</comment>
<comment type="similarity">
    <text evidence="1">Belongs to the universal ribosomal protein uS12 family.</text>
</comment>
<comment type="caution">
    <text evidence="3">Because the enzyme that would modify Asp-102 to 3-methylthioaspartic acid has not been found in the proteome of this organism, that modification is not predicted.</text>
</comment>
<sequence length="135" mass="14927">MPTINQLVRKGRHSKTTKSDSPALNYAYNSMKKKMNYNPAPQMRGVATRVGTMTPKKPNSALRKYARVRLSNLIEVTAYIPGIGHNLQEHSVVLIRGGRVKDLPGVRYHIIRGALDTAGVDGRKQGRSKYGAKKG</sequence>
<name>RS12_LACJO</name>
<gene>
    <name evidence="1" type="primary">rpsL</name>
    <name type="ordered locus">LJ_0335</name>
</gene>
<evidence type="ECO:0000255" key="1">
    <source>
        <dbReference type="HAMAP-Rule" id="MF_00403"/>
    </source>
</evidence>
<evidence type="ECO:0000256" key="2">
    <source>
        <dbReference type="SAM" id="MobiDB-lite"/>
    </source>
</evidence>
<evidence type="ECO:0000305" key="3"/>
<organism>
    <name type="scientific">Lactobacillus johnsonii (strain CNCM I-12250 / La1 / NCC 533)</name>
    <dbReference type="NCBI Taxonomy" id="257314"/>
    <lineage>
        <taxon>Bacteria</taxon>
        <taxon>Bacillati</taxon>
        <taxon>Bacillota</taxon>
        <taxon>Bacilli</taxon>
        <taxon>Lactobacillales</taxon>
        <taxon>Lactobacillaceae</taxon>
        <taxon>Lactobacillus</taxon>
    </lineage>
</organism>
<reference key="1">
    <citation type="journal article" date="2004" name="Proc. Natl. Acad. Sci. U.S.A.">
        <title>The genome sequence of the probiotic intestinal bacterium Lactobacillus johnsonii NCC 533.</title>
        <authorList>
            <person name="Pridmore R.D."/>
            <person name="Berger B."/>
            <person name="Desiere F."/>
            <person name="Vilanova D."/>
            <person name="Barretto C."/>
            <person name="Pittet A.-C."/>
            <person name="Zwahlen M.-C."/>
            <person name="Rouvet M."/>
            <person name="Altermann E."/>
            <person name="Barrangou R."/>
            <person name="Mollet B."/>
            <person name="Mercenier A."/>
            <person name="Klaenhammer T."/>
            <person name="Arigoni F."/>
            <person name="Schell M.A."/>
        </authorList>
    </citation>
    <scope>NUCLEOTIDE SEQUENCE [LARGE SCALE GENOMIC DNA]</scope>
    <source>
        <strain>CNCM I-1225 / La1 / NCC 533</strain>
    </source>
</reference>
<feature type="chain" id="PRO_0000146238" description="Small ribosomal subunit protein uS12">
    <location>
        <begin position="1"/>
        <end position="135"/>
    </location>
</feature>
<feature type="region of interest" description="Disordered" evidence="2">
    <location>
        <begin position="1"/>
        <end position="23"/>
    </location>
</feature>
<accession>Q74L92</accession>
<dbReference type="EMBL" id="AE017198">
    <property type="protein sequence ID" value="AAS08321.1"/>
    <property type="molecule type" value="Genomic_DNA"/>
</dbReference>
<dbReference type="RefSeq" id="WP_003647838.1">
    <property type="nucleotide sequence ID" value="NC_005362.1"/>
</dbReference>
<dbReference type="SMR" id="Q74L92"/>
<dbReference type="GeneID" id="83569750"/>
<dbReference type="KEGG" id="ljo:LJ_0335"/>
<dbReference type="eggNOG" id="COG0048">
    <property type="taxonomic scope" value="Bacteria"/>
</dbReference>
<dbReference type="HOGENOM" id="CLU_104295_1_2_9"/>
<dbReference type="Proteomes" id="UP000000581">
    <property type="component" value="Chromosome"/>
</dbReference>
<dbReference type="GO" id="GO:0015935">
    <property type="term" value="C:small ribosomal subunit"/>
    <property type="evidence" value="ECO:0007669"/>
    <property type="project" value="InterPro"/>
</dbReference>
<dbReference type="GO" id="GO:0019843">
    <property type="term" value="F:rRNA binding"/>
    <property type="evidence" value="ECO:0007669"/>
    <property type="project" value="UniProtKB-UniRule"/>
</dbReference>
<dbReference type="GO" id="GO:0003735">
    <property type="term" value="F:structural constituent of ribosome"/>
    <property type="evidence" value="ECO:0007669"/>
    <property type="project" value="InterPro"/>
</dbReference>
<dbReference type="GO" id="GO:0000049">
    <property type="term" value="F:tRNA binding"/>
    <property type="evidence" value="ECO:0007669"/>
    <property type="project" value="UniProtKB-UniRule"/>
</dbReference>
<dbReference type="GO" id="GO:0006412">
    <property type="term" value="P:translation"/>
    <property type="evidence" value="ECO:0007669"/>
    <property type="project" value="UniProtKB-UniRule"/>
</dbReference>
<dbReference type="CDD" id="cd03368">
    <property type="entry name" value="Ribosomal_S12"/>
    <property type="match status" value="1"/>
</dbReference>
<dbReference type="FunFam" id="2.40.50.140:FF:000001">
    <property type="entry name" value="30S ribosomal protein S12"/>
    <property type="match status" value="1"/>
</dbReference>
<dbReference type="Gene3D" id="2.40.50.140">
    <property type="entry name" value="Nucleic acid-binding proteins"/>
    <property type="match status" value="1"/>
</dbReference>
<dbReference type="HAMAP" id="MF_00403_B">
    <property type="entry name" value="Ribosomal_uS12_B"/>
    <property type="match status" value="1"/>
</dbReference>
<dbReference type="InterPro" id="IPR012340">
    <property type="entry name" value="NA-bd_OB-fold"/>
</dbReference>
<dbReference type="InterPro" id="IPR006032">
    <property type="entry name" value="Ribosomal_uS12"/>
</dbReference>
<dbReference type="InterPro" id="IPR005679">
    <property type="entry name" value="Ribosomal_uS12_bac"/>
</dbReference>
<dbReference type="NCBIfam" id="TIGR00981">
    <property type="entry name" value="rpsL_bact"/>
    <property type="match status" value="1"/>
</dbReference>
<dbReference type="PANTHER" id="PTHR11652">
    <property type="entry name" value="30S RIBOSOMAL PROTEIN S12 FAMILY MEMBER"/>
    <property type="match status" value="1"/>
</dbReference>
<dbReference type="Pfam" id="PF00164">
    <property type="entry name" value="Ribosom_S12_S23"/>
    <property type="match status" value="1"/>
</dbReference>
<dbReference type="PIRSF" id="PIRSF002133">
    <property type="entry name" value="Ribosomal_S12/S23"/>
    <property type="match status" value="1"/>
</dbReference>
<dbReference type="PRINTS" id="PR01034">
    <property type="entry name" value="RIBOSOMALS12"/>
</dbReference>
<dbReference type="SUPFAM" id="SSF50249">
    <property type="entry name" value="Nucleic acid-binding proteins"/>
    <property type="match status" value="1"/>
</dbReference>
<dbReference type="PROSITE" id="PS00055">
    <property type="entry name" value="RIBOSOMAL_S12"/>
    <property type="match status" value="1"/>
</dbReference>
<protein>
    <recommendedName>
        <fullName evidence="1">Small ribosomal subunit protein uS12</fullName>
    </recommendedName>
    <alternativeName>
        <fullName evidence="3">30S ribosomal protein S12</fullName>
    </alternativeName>
</protein>
<proteinExistence type="inferred from homology"/>
<keyword id="KW-0687">Ribonucleoprotein</keyword>
<keyword id="KW-0689">Ribosomal protein</keyword>
<keyword id="KW-0694">RNA-binding</keyword>
<keyword id="KW-0699">rRNA-binding</keyword>
<keyword id="KW-0820">tRNA-binding</keyword>